<proteinExistence type="inferred from homology"/>
<organism>
    <name type="scientific">Xylella fastidiosa (strain M12)</name>
    <dbReference type="NCBI Taxonomy" id="405440"/>
    <lineage>
        <taxon>Bacteria</taxon>
        <taxon>Pseudomonadati</taxon>
        <taxon>Pseudomonadota</taxon>
        <taxon>Gammaproteobacteria</taxon>
        <taxon>Lysobacterales</taxon>
        <taxon>Lysobacteraceae</taxon>
        <taxon>Xylella</taxon>
    </lineage>
</organism>
<protein>
    <recommendedName>
        <fullName evidence="1">Ribonuclease PH</fullName>
        <shortName evidence="1">RNase PH</shortName>
        <ecNumber evidence="1">2.7.7.56</ecNumber>
    </recommendedName>
    <alternativeName>
        <fullName evidence="1">tRNA nucleotidyltransferase</fullName>
    </alternativeName>
</protein>
<gene>
    <name evidence="1" type="primary">rph</name>
    <name type="ordered locus">Xfasm12_0845</name>
</gene>
<feature type="chain" id="PRO_1000129390" description="Ribonuclease PH">
    <location>
        <begin position="1"/>
        <end position="241"/>
    </location>
</feature>
<feature type="binding site" evidence="1">
    <location>
        <position position="89"/>
    </location>
    <ligand>
        <name>phosphate</name>
        <dbReference type="ChEBI" id="CHEBI:43474"/>
        <note>substrate</note>
    </ligand>
</feature>
<feature type="binding site" evidence="1">
    <location>
        <begin position="127"/>
        <end position="129"/>
    </location>
    <ligand>
        <name>phosphate</name>
        <dbReference type="ChEBI" id="CHEBI:43474"/>
        <note>substrate</note>
    </ligand>
</feature>
<sequence length="241" mass="26215">MNVSRPSGRQADALRPVRIERAFTCHAEGSVLVSFGNTLVVCTASVEAKVPVFLRNKGEGWITAEYGMLPRSTHTRSEREAARGKQAGRTLEIQRLIGRALRTCVDRTALGERTITLDCDVLQADGGTRTAAITGAYVALVDAVRCLEQRGQLKKSPLIGAVAAVSVGIYRGMPVLDLDYPEDSDCDTDMNVVMNDEGGFIELQGTAEQQAFRRGELDMLLALAERGTAMLFDIQREALAR</sequence>
<comment type="function">
    <text evidence="1">Phosphorolytic 3'-5' exoribonuclease that plays an important role in tRNA 3'-end maturation. Removes nucleotide residues following the 3'-CCA terminus of tRNAs; can also add nucleotides to the ends of RNA molecules by using nucleoside diphosphates as substrates, but this may not be physiologically important. Probably plays a role in initiation of 16S rRNA degradation (leading to ribosome degradation) during starvation.</text>
</comment>
<comment type="catalytic activity">
    <reaction evidence="1">
        <text>tRNA(n+1) + phosphate = tRNA(n) + a ribonucleoside 5'-diphosphate</text>
        <dbReference type="Rhea" id="RHEA:10628"/>
        <dbReference type="Rhea" id="RHEA-COMP:17343"/>
        <dbReference type="Rhea" id="RHEA-COMP:17344"/>
        <dbReference type="ChEBI" id="CHEBI:43474"/>
        <dbReference type="ChEBI" id="CHEBI:57930"/>
        <dbReference type="ChEBI" id="CHEBI:173114"/>
        <dbReference type="EC" id="2.7.7.56"/>
    </reaction>
</comment>
<comment type="subunit">
    <text evidence="1">Homohexameric ring arranged as a trimer of dimers.</text>
</comment>
<comment type="similarity">
    <text evidence="1">Belongs to the RNase PH family.</text>
</comment>
<evidence type="ECO:0000255" key="1">
    <source>
        <dbReference type="HAMAP-Rule" id="MF_00564"/>
    </source>
</evidence>
<dbReference type="EC" id="2.7.7.56" evidence="1"/>
<dbReference type="EMBL" id="CP000941">
    <property type="protein sequence ID" value="ACA11833.1"/>
    <property type="molecule type" value="Genomic_DNA"/>
</dbReference>
<dbReference type="RefSeq" id="WP_004083697.1">
    <property type="nucleotide sequence ID" value="NC_010513.1"/>
</dbReference>
<dbReference type="SMR" id="B0U6W7"/>
<dbReference type="GeneID" id="93904502"/>
<dbReference type="KEGG" id="xfm:Xfasm12_0845"/>
<dbReference type="HOGENOM" id="CLU_050858_0_0_6"/>
<dbReference type="GO" id="GO:0000175">
    <property type="term" value="F:3'-5'-RNA exonuclease activity"/>
    <property type="evidence" value="ECO:0007669"/>
    <property type="project" value="UniProtKB-UniRule"/>
</dbReference>
<dbReference type="GO" id="GO:0000049">
    <property type="term" value="F:tRNA binding"/>
    <property type="evidence" value="ECO:0007669"/>
    <property type="project" value="UniProtKB-UniRule"/>
</dbReference>
<dbReference type="GO" id="GO:0009022">
    <property type="term" value="F:tRNA nucleotidyltransferase activity"/>
    <property type="evidence" value="ECO:0007669"/>
    <property type="project" value="UniProtKB-UniRule"/>
</dbReference>
<dbReference type="GO" id="GO:0016075">
    <property type="term" value="P:rRNA catabolic process"/>
    <property type="evidence" value="ECO:0007669"/>
    <property type="project" value="UniProtKB-UniRule"/>
</dbReference>
<dbReference type="GO" id="GO:0006364">
    <property type="term" value="P:rRNA processing"/>
    <property type="evidence" value="ECO:0007669"/>
    <property type="project" value="UniProtKB-KW"/>
</dbReference>
<dbReference type="GO" id="GO:0008033">
    <property type="term" value="P:tRNA processing"/>
    <property type="evidence" value="ECO:0007669"/>
    <property type="project" value="UniProtKB-UniRule"/>
</dbReference>
<dbReference type="CDD" id="cd11362">
    <property type="entry name" value="RNase_PH_bact"/>
    <property type="match status" value="1"/>
</dbReference>
<dbReference type="FunFam" id="3.30.230.70:FF:000003">
    <property type="entry name" value="Ribonuclease PH"/>
    <property type="match status" value="1"/>
</dbReference>
<dbReference type="Gene3D" id="3.30.230.70">
    <property type="entry name" value="GHMP Kinase, N-terminal domain"/>
    <property type="match status" value="1"/>
</dbReference>
<dbReference type="HAMAP" id="MF_00564">
    <property type="entry name" value="RNase_PH"/>
    <property type="match status" value="1"/>
</dbReference>
<dbReference type="InterPro" id="IPR001247">
    <property type="entry name" value="ExoRNase_PH_dom1"/>
</dbReference>
<dbReference type="InterPro" id="IPR015847">
    <property type="entry name" value="ExoRNase_PH_dom2"/>
</dbReference>
<dbReference type="InterPro" id="IPR036345">
    <property type="entry name" value="ExoRNase_PH_dom2_sf"/>
</dbReference>
<dbReference type="InterPro" id="IPR027408">
    <property type="entry name" value="PNPase/RNase_PH_dom_sf"/>
</dbReference>
<dbReference type="InterPro" id="IPR020568">
    <property type="entry name" value="Ribosomal_Su5_D2-typ_SF"/>
</dbReference>
<dbReference type="InterPro" id="IPR050080">
    <property type="entry name" value="RNase_PH"/>
</dbReference>
<dbReference type="InterPro" id="IPR002381">
    <property type="entry name" value="RNase_PH_bac-type"/>
</dbReference>
<dbReference type="InterPro" id="IPR018336">
    <property type="entry name" value="RNase_PH_CS"/>
</dbReference>
<dbReference type="NCBIfam" id="TIGR01966">
    <property type="entry name" value="RNasePH"/>
    <property type="match status" value="1"/>
</dbReference>
<dbReference type="PANTHER" id="PTHR11953">
    <property type="entry name" value="EXOSOME COMPLEX COMPONENT"/>
    <property type="match status" value="1"/>
</dbReference>
<dbReference type="PANTHER" id="PTHR11953:SF0">
    <property type="entry name" value="EXOSOME COMPLEX COMPONENT RRP41"/>
    <property type="match status" value="1"/>
</dbReference>
<dbReference type="Pfam" id="PF01138">
    <property type="entry name" value="RNase_PH"/>
    <property type="match status" value="1"/>
</dbReference>
<dbReference type="Pfam" id="PF03725">
    <property type="entry name" value="RNase_PH_C"/>
    <property type="match status" value="1"/>
</dbReference>
<dbReference type="SUPFAM" id="SSF55666">
    <property type="entry name" value="Ribonuclease PH domain 2-like"/>
    <property type="match status" value="1"/>
</dbReference>
<dbReference type="SUPFAM" id="SSF54211">
    <property type="entry name" value="Ribosomal protein S5 domain 2-like"/>
    <property type="match status" value="1"/>
</dbReference>
<dbReference type="PROSITE" id="PS01277">
    <property type="entry name" value="RIBONUCLEASE_PH"/>
    <property type="match status" value="1"/>
</dbReference>
<keyword id="KW-0548">Nucleotidyltransferase</keyword>
<keyword id="KW-0694">RNA-binding</keyword>
<keyword id="KW-0698">rRNA processing</keyword>
<keyword id="KW-0808">Transferase</keyword>
<keyword id="KW-0819">tRNA processing</keyword>
<keyword id="KW-0820">tRNA-binding</keyword>
<name>RNPH_XYLFM</name>
<reference key="1">
    <citation type="journal article" date="2010" name="J. Bacteriol.">
        <title>Whole genome sequences of two Xylella fastidiosa strains (M12 and M23) causing almond leaf scorch disease in California.</title>
        <authorList>
            <person name="Chen J."/>
            <person name="Xie G."/>
            <person name="Han S."/>
            <person name="Chertkov O."/>
            <person name="Sims D."/>
            <person name="Civerolo E.L."/>
        </authorList>
    </citation>
    <scope>NUCLEOTIDE SEQUENCE [LARGE SCALE GENOMIC DNA]</scope>
    <source>
        <strain>M12</strain>
    </source>
</reference>
<accession>B0U6W7</accession>